<accession>Q1PE48</accession>
<accession>A0MF99</accession>
<accession>Q9SZ17</accession>
<sequence>MAMEKDLSPNSPRIRKLRDTSYPTTPTSRMNTNNQRDNHYPNIPNSPRDYNYTPSSPTARIRHRRRSSENLAEVNRSNVSRVSNLLLGDKNKYRSMWIRTCSSLWMLGGVVFIIYMGHLYIWAMVVVIQIFMAKELFFLRRRAHEERRLPGFWLLNWHFFFTAMLFVYGRIIQQQLVNTVSSDRFIYKLVSGLIKYQMVICYFLYIAGLIWFILTLKNKMYKYQFGQYAWTHMILIVVFTQSSFTVANIFEGIFWFLLPAALIAMNDVAAYFFGFYFGKTPLIKLSPKKTWEGFIGASVATIISAFIFANVLGQFQWLTCPRKDLSTGWLHCDPGPLFRPEYYPFPSWITPFSPWKGISTLPVQWHAFSLGLFASIMAPFGGFFASGFKRAFKIKDFGDSIPGHGGFTDRMDCQMVMAVFAYIYIQSFIVNRDYSVEMILDQISRSLGHEEQKMLYEKLGDILQHKLQGRF</sequence>
<evidence type="ECO:0000250" key="1">
    <source>
        <dbReference type="UniProtKB" id="Q94A03"/>
    </source>
</evidence>
<evidence type="ECO:0000255" key="2"/>
<evidence type="ECO:0000256" key="3">
    <source>
        <dbReference type="SAM" id="MobiDB-lite"/>
    </source>
</evidence>
<evidence type="ECO:0000269" key="4">
    <source>
    </source>
</evidence>
<evidence type="ECO:0000303" key="5">
    <source>
    </source>
</evidence>
<evidence type="ECO:0000305" key="6"/>
<evidence type="ECO:0000312" key="7">
    <source>
        <dbReference type="Araport" id="AT4G26770"/>
    </source>
</evidence>
<evidence type="ECO:0000312" key="8">
    <source>
        <dbReference type="EMBL" id="ABE66091.1"/>
    </source>
</evidence>
<evidence type="ECO:0000312" key="9">
    <source>
        <dbReference type="EMBL" id="CAB36523.1"/>
    </source>
</evidence>
<organism evidence="8">
    <name type="scientific">Arabidopsis thaliana</name>
    <name type="common">Mouse-ear cress</name>
    <dbReference type="NCBI Taxonomy" id="3702"/>
    <lineage>
        <taxon>Eukaryota</taxon>
        <taxon>Viridiplantae</taxon>
        <taxon>Streptophyta</taxon>
        <taxon>Embryophyta</taxon>
        <taxon>Tracheophyta</taxon>
        <taxon>Spermatophyta</taxon>
        <taxon>Magnoliopsida</taxon>
        <taxon>eudicotyledons</taxon>
        <taxon>Gunneridae</taxon>
        <taxon>Pentapetalae</taxon>
        <taxon>rosids</taxon>
        <taxon>malvids</taxon>
        <taxon>Brassicales</taxon>
        <taxon>Brassicaceae</taxon>
        <taxon>Camelineae</taxon>
        <taxon>Arabidopsis</taxon>
    </lineage>
</organism>
<proteinExistence type="evidence at protein level"/>
<reference key="1">
    <citation type="journal article" date="1999" name="Nature">
        <title>Sequence and analysis of chromosome 4 of the plant Arabidopsis thaliana.</title>
        <authorList>
            <person name="Mayer K.F.X."/>
            <person name="Schueller C."/>
            <person name="Wambutt R."/>
            <person name="Murphy G."/>
            <person name="Volckaert G."/>
            <person name="Pohl T."/>
            <person name="Duesterhoeft A."/>
            <person name="Stiekema W."/>
            <person name="Entian K.-D."/>
            <person name="Terryn N."/>
            <person name="Harris B."/>
            <person name="Ansorge W."/>
            <person name="Brandt P."/>
            <person name="Grivell L.A."/>
            <person name="Rieger M."/>
            <person name="Weichselgartner M."/>
            <person name="de Simone V."/>
            <person name="Obermaier B."/>
            <person name="Mache R."/>
            <person name="Mueller M."/>
            <person name="Kreis M."/>
            <person name="Delseny M."/>
            <person name="Puigdomenech P."/>
            <person name="Watson M."/>
            <person name="Schmidtheini T."/>
            <person name="Reichert B."/>
            <person name="Portetelle D."/>
            <person name="Perez-Alonso M."/>
            <person name="Boutry M."/>
            <person name="Bancroft I."/>
            <person name="Vos P."/>
            <person name="Hoheisel J."/>
            <person name="Zimmermann W."/>
            <person name="Wedler H."/>
            <person name="Ridley P."/>
            <person name="Langham S.-A."/>
            <person name="McCullagh B."/>
            <person name="Bilham L."/>
            <person name="Robben J."/>
            <person name="van der Schueren J."/>
            <person name="Grymonprez B."/>
            <person name="Chuang Y.-J."/>
            <person name="Vandenbussche F."/>
            <person name="Braeken M."/>
            <person name="Weltjens I."/>
            <person name="Voet M."/>
            <person name="Bastiaens I."/>
            <person name="Aert R."/>
            <person name="Defoor E."/>
            <person name="Weitzenegger T."/>
            <person name="Bothe G."/>
            <person name="Ramsperger U."/>
            <person name="Hilbert H."/>
            <person name="Braun M."/>
            <person name="Holzer E."/>
            <person name="Brandt A."/>
            <person name="Peters S."/>
            <person name="van Staveren M."/>
            <person name="Dirkse W."/>
            <person name="Mooijman P."/>
            <person name="Klein Lankhorst R."/>
            <person name="Rose M."/>
            <person name="Hauf J."/>
            <person name="Koetter P."/>
            <person name="Berneiser S."/>
            <person name="Hempel S."/>
            <person name="Feldpausch M."/>
            <person name="Lamberth S."/>
            <person name="Van den Daele H."/>
            <person name="De Keyser A."/>
            <person name="Buysshaert C."/>
            <person name="Gielen J."/>
            <person name="Villarroel R."/>
            <person name="De Clercq R."/>
            <person name="van Montagu M."/>
            <person name="Rogers J."/>
            <person name="Cronin A."/>
            <person name="Quail M.A."/>
            <person name="Bray-Allen S."/>
            <person name="Clark L."/>
            <person name="Doggett J."/>
            <person name="Hall S."/>
            <person name="Kay M."/>
            <person name="Lennard N."/>
            <person name="McLay K."/>
            <person name="Mayes R."/>
            <person name="Pettett A."/>
            <person name="Rajandream M.A."/>
            <person name="Lyne M."/>
            <person name="Benes V."/>
            <person name="Rechmann S."/>
            <person name="Borkova D."/>
            <person name="Bloecker H."/>
            <person name="Scharfe M."/>
            <person name="Grimm M."/>
            <person name="Loehnert T.-H."/>
            <person name="Dose S."/>
            <person name="de Haan M."/>
            <person name="Maarse A.C."/>
            <person name="Schaefer M."/>
            <person name="Mueller-Auer S."/>
            <person name="Gabel C."/>
            <person name="Fuchs M."/>
            <person name="Fartmann B."/>
            <person name="Granderath K."/>
            <person name="Dauner D."/>
            <person name="Herzl A."/>
            <person name="Neumann S."/>
            <person name="Argiriou A."/>
            <person name="Vitale D."/>
            <person name="Liguori R."/>
            <person name="Piravandi E."/>
            <person name="Massenet O."/>
            <person name="Quigley F."/>
            <person name="Clabauld G."/>
            <person name="Muendlein A."/>
            <person name="Felber R."/>
            <person name="Schnabl S."/>
            <person name="Hiller R."/>
            <person name="Schmidt W."/>
            <person name="Lecharny A."/>
            <person name="Aubourg S."/>
            <person name="Chefdor F."/>
            <person name="Cooke R."/>
            <person name="Berger C."/>
            <person name="Monfort A."/>
            <person name="Casacuberta E."/>
            <person name="Gibbons T."/>
            <person name="Weber N."/>
            <person name="Vandenbol M."/>
            <person name="Bargues M."/>
            <person name="Terol J."/>
            <person name="Torres A."/>
            <person name="Perez-Perez A."/>
            <person name="Purnelle B."/>
            <person name="Bent E."/>
            <person name="Johnson S."/>
            <person name="Tacon D."/>
            <person name="Jesse T."/>
            <person name="Heijnen L."/>
            <person name="Schwarz S."/>
            <person name="Scholler P."/>
            <person name="Heber S."/>
            <person name="Francs P."/>
            <person name="Bielke C."/>
            <person name="Frishman D."/>
            <person name="Haase D."/>
            <person name="Lemcke K."/>
            <person name="Mewes H.-W."/>
            <person name="Stocker S."/>
            <person name="Zaccaria P."/>
            <person name="Bevan M."/>
            <person name="Wilson R.K."/>
            <person name="de la Bastide M."/>
            <person name="Habermann K."/>
            <person name="Parnell L."/>
            <person name="Dedhia N."/>
            <person name="Gnoj L."/>
            <person name="Schutz K."/>
            <person name="Huang E."/>
            <person name="Spiegel L."/>
            <person name="Sekhon M."/>
            <person name="Murray J."/>
            <person name="Sheet P."/>
            <person name="Cordes M."/>
            <person name="Abu-Threideh J."/>
            <person name="Stoneking T."/>
            <person name="Kalicki J."/>
            <person name="Graves T."/>
            <person name="Harmon G."/>
            <person name="Edwards J."/>
            <person name="Latreille P."/>
            <person name="Courtney L."/>
            <person name="Cloud J."/>
            <person name="Abbott A."/>
            <person name="Scott K."/>
            <person name="Johnson D."/>
            <person name="Minx P."/>
            <person name="Bentley D."/>
            <person name="Fulton B."/>
            <person name="Miller N."/>
            <person name="Greco T."/>
            <person name="Kemp K."/>
            <person name="Kramer J."/>
            <person name="Fulton L."/>
            <person name="Mardis E."/>
            <person name="Dante M."/>
            <person name="Pepin K."/>
            <person name="Hillier L.W."/>
            <person name="Nelson J."/>
            <person name="Spieth J."/>
            <person name="Ryan E."/>
            <person name="Andrews S."/>
            <person name="Geisel C."/>
            <person name="Layman D."/>
            <person name="Du H."/>
            <person name="Ali J."/>
            <person name="Berghoff A."/>
            <person name="Jones K."/>
            <person name="Drone K."/>
            <person name="Cotton M."/>
            <person name="Joshu C."/>
            <person name="Antonoiu B."/>
            <person name="Zidanic M."/>
            <person name="Strong C."/>
            <person name="Sun H."/>
            <person name="Lamar B."/>
            <person name="Yordan C."/>
            <person name="Ma P."/>
            <person name="Zhong J."/>
            <person name="Preston R."/>
            <person name="Vil D."/>
            <person name="Shekher M."/>
            <person name="Matero A."/>
            <person name="Shah R."/>
            <person name="Swaby I.K."/>
            <person name="O'Shaughnessy A."/>
            <person name="Rodriguez M."/>
            <person name="Hoffman J."/>
            <person name="Till S."/>
            <person name="Granat S."/>
            <person name="Shohdy N."/>
            <person name="Hasegawa A."/>
            <person name="Hameed A."/>
            <person name="Lodhi M."/>
            <person name="Johnson A."/>
            <person name="Chen E."/>
            <person name="Marra M.A."/>
            <person name="Martienssen R."/>
            <person name="McCombie W.R."/>
        </authorList>
    </citation>
    <scope>NUCLEOTIDE SEQUENCE [LARGE SCALE GENOMIC DNA]</scope>
    <source>
        <strain>cv. Columbia</strain>
    </source>
</reference>
<reference key="2">
    <citation type="journal article" date="2017" name="Plant J.">
        <title>Araport11: a complete reannotation of the Arabidopsis thaliana reference genome.</title>
        <authorList>
            <person name="Cheng C.Y."/>
            <person name="Krishnakumar V."/>
            <person name="Chan A.P."/>
            <person name="Thibaud-Nissen F."/>
            <person name="Schobel S."/>
            <person name="Town C.D."/>
        </authorList>
    </citation>
    <scope>GENOME REANNOTATION</scope>
    <source>
        <strain>cv. Columbia</strain>
    </source>
</reference>
<reference key="3">
    <citation type="journal article" date="2006" name="Plant Biotechnol. J.">
        <title>Simultaneous high-throughput recombinational cloning of open reading frames in closed and open configurations.</title>
        <authorList>
            <person name="Underwood B.A."/>
            <person name="Vanderhaeghen R."/>
            <person name="Whitford R."/>
            <person name="Town C.D."/>
            <person name="Hilson P."/>
        </authorList>
    </citation>
    <scope>NUCLEOTIDE SEQUENCE [LARGE SCALE MRNA]</scope>
    <source>
        <strain>cv. Columbia</strain>
    </source>
</reference>
<reference key="4">
    <citation type="journal article" date="2010" name="Plant Physiol.">
        <title>Two closely related genes of Arabidopsis encode plastidial cytidinediphosphate diacylglycerol synthases essential for photoautotrophic growth.</title>
        <authorList>
            <person name="Haselier A."/>
            <person name="Akbari H."/>
            <person name="Weth A."/>
            <person name="Baumgartner W."/>
            <person name="Frentzen M."/>
        </authorList>
    </citation>
    <scope>FUNCTION</scope>
    <scope>CATALYTIC ACTIVITY</scope>
    <scope>PATHWAY</scope>
    <scope>GENE FAMILY</scope>
    <scope>NOMENCLATURE</scope>
</reference>
<dbReference type="EC" id="2.7.7.41" evidence="4"/>
<dbReference type="EMBL" id="AL035440">
    <property type="protein sequence ID" value="CAB36523.1"/>
    <property type="status" value="ALT_SEQ"/>
    <property type="molecule type" value="Genomic_DNA"/>
</dbReference>
<dbReference type="EMBL" id="AL161565">
    <property type="protein sequence ID" value="CAB79532.1"/>
    <property type="status" value="ALT_SEQ"/>
    <property type="molecule type" value="Genomic_DNA"/>
</dbReference>
<dbReference type="EMBL" id="CP002687">
    <property type="protein sequence ID" value="AEE85250.1"/>
    <property type="molecule type" value="Genomic_DNA"/>
</dbReference>
<dbReference type="EMBL" id="DQ446870">
    <property type="protein sequence ID" value="ABE66091.1"/>
    <property type="molecule type" value="mRNA"/>
</dbReference>
<dbReference type="EMBL" id="DQ653225">
    <property type="protein sequence ID" value="ABK28650.1"/>
    <property type="status" value="ALT_SEQ"/>
    <property type="molecule type" value="mRNA"/>
</dbReference>
<dbReference type="PIR" id="T04800">
    <property type="entry name" value="T04800"/>
</dbReference>
<dbReference type="RefSeq" id="NP_194407.5">
    <property type="nucleotide sequence ID" value="NM_118811.7"/>
</dbReference>
<dbReference type="SMR" id="Q1PE48"/>
<dbReference type="FunCoup" id="Q1PE48">
    <property type="interactions" value="3461"/>
</dbReference>
<dbReference type="IntAct" id="Q1PE48">
    <property type="interactions" value="34"/>
</dbReference>
<dbReference type="STRING" id="3702.Q1PE48"/>
<dbReference type="PaxDb" id="3702-AT4G26770.1"/>
<dbReference type="ProteomicsDB" id="224389"/>
<dbReference type="EnsemblPlants" id="AT4G26770.1">
    <property type="protein sequence ID" value="AT4G26770.1"/>
    <property type="gene ID" value="AT4G26770"/>
</dbReference>
<dbReference type="GeneID" id="828784"/>
<dbReference type="Gramene" id="AT4G26770.1">
    <property type="protein sequence ID" value="AT4G26770.1"/>
    <property type="gene ID" value="AT4G26770"/>
</dbReference>
<dbReference type="KEGG" id="ath:AT4G26770"/>
<dbReference type="Araport" id="AT4G26770"/>
<dbReference type="TAIR" id="AT4G26770"/>
<dbReference type="eggNOG" id="KOG1440">
    <property type="taxonomic scope" value="Eukaryota"/>
</dbReference>
<dbReference type="HOGENOM" id="CLU_023471_2_0_1"/>
<dbReference type="InParanoid" id="Q1PE48"/>
<dbReference type="OMA" id="MPIQWHA"/>
<dbReference type="OrthoDB" id="10260889at2759"/>
<dbReference type="PhylomeDB" id="Q1PE48"/>
<dbReference type="BRENDA" id="2.7.7.41">
    <property type="organism ID" value="399"/>
</dbReference>
<dbReference type="UniPathway" id="UPA00557">
    <property type="reaction ID" value="UER00614"/>
</dbReference>
<dbReference type="PRO" id="PR:Q1PE48"/>
<dbReference type="Proteomes" id="UP000006548">
    <property type="component" value="Chromosome 4"/>
</dbReference>
<dbReference type="ExpressionAtlas" id="Q1PE48">
    <property type="expression patterns" value="baseline and differential"/>
</dbReference>
<dbReference type="GO" id="GO:0016020">
    <property type="term" value="C:membrane"/>
    <property type="evidence" value="ECO:0007669"/>
    <property type="project" value="UniProtKB-SubCell"/>
</dbReference>
<dbReference type="GO" id="GO:0004605">
    <property type="term" value="F:phosphatidate cytidylyltransferase activity"/>
    <property type="evidence" value="ECO:0000315"/>
    <property type="project" value="TAIR"/>
</dbReference>
<dbReference type="GO" id="GO:0016024">
    <property type="term" value="P:CDP-diacylglycerol biosynthetic process"/>
    <property type="evidence" value="ECO:0007669"/>
    <property type="project" value="UniProtKB-UniPathway"/>
</dbReference>
<dbReference type="InterPro" id="IPR000374">
    <property type="entry name" value="PC_trans"/>
</dbReference>
<dbReference type="InterPro" id="IPR016720">
    <property type="entry name" value="PC_Trfase_euk"/>
</dbReference>
<dbReference type="PANTHER" id="PTHR13773">
    <property type="entry name" value="PHOSPHATIDATE CYTIDYLYLTRANSFERASE"/>
    <property type="match status" value="1"/>
</dbReference>
<dbReference type="PANTHER" id="PTHR13773:SF34">
    <property type="entry name" value="PHOSPHATIDATE CYTIDYLYLTRANSFERASE 3"/>
    <property type="match status" value="1"/>
</dbReference>
<dbReference type="Pfam" id="PF01148">
    <property type="entry name" value="CTP_transf_1"/>
    <property type="match status" value="1"/>
</dbReference>
<dbReference type="PIRSF" id="PIRSF018269">
    <property type="entry name" value="PC_trans_euk"/>
    <property type="match status" value="1"/>
</dbReference>
<dbReference type="PROSITE" id="PS01315">
    <property type="entry name" value="CDS"/>
    <property type="match status" value="1"/>
</dbReference>
<comment type="function">
    <text evidence="4">May be involved in the synthesis of minor phospholipids and in modulation of IP3-mediated signal transduction.</text>
</comment>
<comment type="catalytic activity">
    <reaction evidence="4">
        <text>a 1,2-diacyl-sn-glycero-3-phosphate + CTP + H(+) = a CDP-1,2-diacyl-sn-glycerol + diphosphate</text>
        <dbReference type="Rhea" id="RHEA:16229"/>
        <dbReference type="ChEBI" id="CHEBI:15378"/>
        <dbReference type="ChEBI" id="CHEBI:33019"/>
        <dbReference type="ChEBI" id="CHEBI:37563"/>
        <dbReference type="ChEBI" id="CHEBI:58332"/>
        <dbReference type="ChEBI" id="CHEBI:58608"/>
        <dbReference type="EC" id="2.7.7.41"/>
    </reaction>
</comment>
<comment type="cofactor">
    <cofactor evidence="1">
        <name>Mg(2+)</name>
        <dbReference type="ChEBI" id="CHEBI:18420"/>
    </cofactor>
    <text evidence="1">Requires a divalent cation for activity.</text>
</comment>
<comment type="pathway">
    <text evidence="4">Phospholipid metabolism; CDP-diacylglycerol biosynthesis; CDP-diacylglycerol from sn-glycerol 3-phosphate: step 3/3.</text>
</comment>
<comment type="subcellular location">
    <subcellularLocation>
        <location evidence="2">Membrane</location>
        <topology evidence="2">Multi-pass membrane protein</topology>
    </subcellularLocation>
</comment>
<comment type="similarity">
    <text evidence="6">Belongs to the CDS family.</text>
</comment>
<comment type="sequence caution" evidence="6">
    <conflict type="erroneous termination">
        <sequence resource="EMBL-CDS" id="ABK28650"/>
    </conflict>
    <text>Extended C-terminus.</text>
</comment>
<comment type="sequence caution" evidence="6">
    <conflict type="erroneous gene model prediction">
        <sequence resource="EMBL-CDS" id="CAB36523"/>
    </conflict>
</comment>
<comment type="sequence caution" evidence="6">
    <conflict type="erroneous gene model prediction">
        <sequence resource="EMBL-CDS" id="CAB79532"/>
    </conflict>
</comment>
<protein>
    <recommendedName>
        <fullName evidence="5">Phosphatidate cytidylyltransferase 3</fullName>
        <ecNumber evidence="4">2.7.7.41</ecNumber>
    </recommendedName>
    <alternativeName>
        <fullName>CDP-DAG synthase 3</fullName>
    </alternativeName>
    <alternativeName>
        <fullName>CDP-DG synthase 3</fullName>
    </alternativeName>
    <alternativeName>
        <fullName>CDP-diacylglycerol synthase 3</fullName>
        <shortName>CDS3</shortName>
    </alternativeName>
    <alternativeName>
        <fullName>CDP-diglyceride pyrophosphorylase 3</fullName>
    </alternativeName>
    <alternativeName>
        <fullName>CDP-diglyceride synthase 3</fullName>
    </alternativeName>
    <alternativeName>
        <fullName>CTP:phosphatidate cytidylyltransferase 3</fullName>
    </alternativeName>
</protein>
<keyword id="KW-0444">Lipid biosynthesis</keyword>
<keyword id="KW-0443">Lipid metabolism</keyword>
<keyword id="KW-0460">Magnesium</keyword>
<keyword id="KW-0472">Membrane</keyword>
<keyword id="KW-0548">Nucleotidyltransferase</keyword>
<keyword id="KW-0594">Phospholipid biosynthesis</keyword>
<keyword id="KW-1208">Phospholipid metabolism</keyword>
<keyword id="KW-1185">Reference proteome</keyword>
<keyword id="KW-0808">Transferase</keyword>
<keyword id="KW-0812">Transmembrane</keyword>
<keyword id="KW-1133">Transmembrane helix</keyword>
<gene>
    <name evidence="5" type="primary">CDS3</name>
    <name evidence="7" type="ordered locus">At4g26770</name>
    <name evidence="9" type="ORF">F10M23.110</name>
</gene>
<feature type="chain" id="PRO_0000431832" description="Phosphatidate cytidylyltransferase 3">
    <location>
        <begin position="1"/>
        <end position="471"/>
    </location>
</feature>
<feature type="transmembrane region" description="Helical; Name=1" evidence="2">
    <location>
        <begin position="97"/>
        <end position="116"/>
    </location>
</feature>
<feature type="transmembrane region" description="Helical; Name=2" evidence="2">
    <location>
        <begin position="120"/>
        <end position="139"/>
    </location>
</feature>
<feature type="transmembrane region" description="Helical; Name=3" evidence="2">
    <location>
        <begin position="149"/>
        <end position="169"/>
    </location>
</feature>
<feature type="transmembrane region" description="Helical; Name=4" evidence="2">
    <location>
        <begin position="196"/>
        <end position="216"/>
    </location>
</feature>
<feature type="transmembrane region" description="Helical; Name=5" evidence="2">
    <location>
        <begin position="228"/>
        <end position="250"/>
    </location>
</feature>
<feature type="transmembrane region" description="Helical; Name=6" evidence="2">
    <location>
        <begin position="255"/>
        <end position="277"/>
    </location>
</feature>
<feature type="transmembrane region" description="Helical; Name=7" evidence="2">
    <location>
        <begin position="293"/>
        <end position="313"/>
    </location>
</feature>
<feature type="transmembrane region" description="Helical; Name=8" evidence="2">
    <location>
        <begin position="368"/>
        <end position="388"/>
    </location>
</feature>
<feature type="region of interest" description="Disordered" evidence="3">
    <location>
        <begin position="1"/>
        <end position="72"/>
    </location>
</feature>
<feature type="compositionally biased region" description="Polar residues" evidence="3">
    <location>
        <begin position="21"/>
        <end position="35"/>
    </location>
</feature>
<feature type="sequence conflict" description="In Ref. 1; CAB36523/CAB79532." evidence="6" ref="1">
    <original>L</original>
    <variation>F</variation>
    <location>
        <position position="325"/>
    </location>
</feature>
<name>CDS3_ARATH</name>